<feature type="chain" id="PRO_0000099477" description="Apoptosis regulator OPG045">
    <location>
        <begin position="1"/>
        <end position="227"/>
    </location>
</feature>
<protein>
    <recommendedName>
        <fullName>Apoptosis regulator OPG045</fullName>
    </recommendedName>
    <alternativeName>
        <fullName>Protein F1</fullName>
    </alternativeName>
</protein>
<name>PG045_RABPU</name>
<dbReference type="EMBL" id="AY484669">
    <property type="protein sequence ID" value="AAS49742.1"/>
    <property type="molecule type" value="Genomic_DNA"/>
</dbReference>
<dbReference type="SMR" id="Q6RZR2"/>
<dbReference type="MEROPS" id="I91.001"/>
<dbReference type="Proteomes" id="UP000166173">
    <property type="component" value="Segment"/>
</dbReference>
<dbReference type="GO" id="GO:0044193">
    <property type="term" value="C:host cell mitochondrial outer membrane"/>
    <property type="evidence" value="ECO:0007669"/>
    <property type="project" value="UniProtKB-SubCell"/>
</dbReference>
<dbReference type="GO" id="GO:0016020">
    <property type="term" value="C:membrane"/>
    <property type="evidence" value="ECO:0007669"/>
    <property type="project" value="UniProtKB-KW"/>
</dbReference>
<dbReference type="GO" id="GO:0042981">
    <property type="term" value="P:regulation of apoptotic process"/>
    <property type="evidence" value="ECO:0007669"/>
    <property type="project" value="InterPro"/>
</dbReference>
<dbReference type="GO" id="GO:0033668">
    <property type="term" value="P:symbiont-mediated suppression of host apoptosis"/>
    <property type="evidence" value="ECO:0007669"/>
    <property type="project" value="UniProtKB-KW"/>
</dbReference>
<dbReference type="FunFam" id="1.10.437.10:FF:000013">
    <property type="entry name" value="Protein F1"/>
    <property type="match status" value="1"/>
</dbReference>
<dbReference type="Gene3D" id="1.10.437.10">
    <property type="entry name" value="Blc2-like"/>
    <property type="match status" value="1"/>
</dbReference>
<dbReference type="InterPro" id="IPR036834">
    <property type="entry name" value="Bcl-2-like_sf"/>
</dbReference>
<dbReference type="InterPro" id="IPR011207">
    <property type="entry name" value="Orthopox_F1"/>
</dbReference>
<dbReference type="InterPro" id="IPR021119">
    <property type="entry name" value="Poxvirus_F1/C10"/>
</dbReference>
<dbReference type="Pfam" id="PF11099">
    <property type="entry name" value="M11L"/>
    <property type="match status" value="1"/>
</dbReference>
<dbReference type="PIRSF" id="PIRSF015971">
    <property type="entry name" value="VAC_F1L"/>
    <property type="match status" value="1"/>
</dbReference>
<evidence type="ECO:0000250" key="1">
    <source>
        <dbReference type="UniProtKB" id="O57173"/>
    </source>
</evidence>
<evidence type="ECO:0000250" key="2">
    <source>
        <dbReference type="UniProtKB" id="P24356"/>
    </source>
</evidence>
<evidence type="ECO:0000305" key="3"/>
<sequence>MLSMFMYNNIVDYVDDIDNGIVQDIEDEASNNVDHDYVYPLPENMVYRFDKSTNILDYLSTERDHVMMAVRYYMSKQRLDDLYRQLPTKTRSYIDIINIYCDKVSNDYNRDMNIIHDMASTESFTVYDINNEVNTMLMDNKGLGVRLATISFITELGRRCMNPVETIKMFTLLSHTICDDCFVDYITDISTPRDNATTNSSTREYLKLMGIAVIMFATYKTLKYMIG</sequence>
<organismHost>
    <name type="scientific">Oryctolagus cuniculus</name>
    <name type="common">Rabbit</name>
    <dbReference type="NCBI Taxonomy" id="9986"/>
</organismHost>
<keyword id="KW-1035">Host cytoplasm</keyword>
<keyword id="KW-1043">Host membrane</keyword>
<keyword id="KW-1045">Host mitochondrion</keyword>
<keyword id="KW-1047">Host mitochondrion outer membrane</keyword>
<keyword id="KW-0945">Host-virus interaction</keyword>
<keyword id="KW-1081">Inhibition of host apoptosis by viral BCL2-like protein</keyword>
<keyword id="KW-0472">Membrane</keyword>
<keyword id="KW-1119">Modulation of host cell apoptosis by virus</keyword>
<gene>
    <name type="primary">OPG045</name>
    <name type="ordered locus">RPXV029</name>
</gene>
<accession>Q6RZR2</accession>
<reference key="1">
    <citation type="journal article" date="2005" name="J. Gen. Virol.">
        <title>Complete coding sequences of the rabbitpox virus genome.</title>
        <authorList>
            <person name="Li G."/>
            <person name="Chen N."/>
            <person name="Roper R.L."/>
            <person name="Feng Z."/>
            <person name="Hunter A.L."/>
            <person name="Danila M."/>
            <person name="Lefkowitz E.J."/>
            <person name="Buller R.M.L."/>
            <person name="Upton C."/>
        </authorList>
    </citation>
    <scope>NUCLEOTIDE SEQUENCE [LARGE SCALE GENOMIC DNA]</scope>
</reference>
<organism>
    <name type="scientific">Rabbitpox virus (strain Utrecht)</name>
    <name type="common">RPV</name>
    <dbReference type="NCBI Taxonomy" id="45417"/>
    <lineage>
        <taxon>Viruses</taxon>
        <taxon>Varidnaviria</taxon>
        <taxon>Bamfordvirae</taxon>
        <taxon>Nucleocytoviricota</taxon>
        <taxon>Pokkesviricetes</taxon>
        <taxon>Chitovirales</taxon>
        <taxon>Poxviridae</taxon>
        <taxon>Chordopoxvirinae</taxon>
        <taxon>Orthopoxvirus</taxon>
        <taxon>Vaccinia virus</taxon>
    </lineage>
</organism>
<comment type="function">
    <text evidence="2">Plays a role in evading host innate immune response by inhibiting host inflammasome activation. Interacts with and inhibits NLR-mediated interleukin-1 beta/IL1B production in infected cells. At the host mitochondria outer membrane, interacts with the BH3 domain of host BAK and prevents BAK from binding active BAX. In turn, host apoptosis is inhibited.</text>
</comment>
<comment type="subunit">
    <text evidence="1 2">Homodimer. Interacts with host pro-apoptotic protein BCL2L11 (via BH3 domain). Interacts with host NLRP1. Interacts with host BAK.</text>
</comment>
<comment type="subcellular location">
    <subcellularLocation>
        <location evidence="2">Host mitochondrion outer membrane</location>
    </subcellularLocation>
    <subcellularLocation>
        <location evidence="2">Host cytoplasm</location>
    </subcellularLocation>
</comment>
<comment type="induction">
    <text evidence="2">Expressed in the early phase of the viral replicative cycle.</text>
</comment>
<comment type="similarity">
    <text evidence="3">Belongs to the orthopoxvirus OPG045 family.</text>
</comment>
<proteinExistence type="inferred from homology"/>